<sequence>MNRHRPHSHRSKPASTQDQPDSVRRYRDPRFDAIAVKVFPGEHYVTSNPDEMLVTILGSCVAACIRDPLAKVGGMNHFMLPEAGGSGWDTASDSMRYGNVAMERLINDILVRGGMRQRLEIKVFGGGNVMKSTANIGHRNADFVEEYLAAESLPIAARHLRGHLPRRVHYFPITGRVMLLELARTEQEAVVRLERDYKSKIQVEPVAGSAELF</sequence>
<name>CHED_RHOP5</name>
<comment type="function">
    <text evidence="1">Probably deamidates glutamine residues to glutamate on methyl-accepting chemotaxis receptors (MCPs), playing an important role in chemotaxis.</text>
</comment>
<comment type="catalytic activity">
    <reaction evidence="1">
        <text>L-glutaminyl-[protein] + H2O = L-glutamyl-[protein] + NH4(+)</text>
        <dbReference type="Rhea" id="RHEA:16441"/>
        <dbReference type="Rhea" id="RHEA-COMP:10207"/>
        <dbReference type="Rhea" id="RHEA-COMP:10208"/>
        <dbReference type="ChEBI" id="CHEBI:15377"/>
        <dbReference type="ChEBI" id="CHEBI:28938"/>
        <dbReference type="ChEBI" id="CHEBI:29973"/>
        <dbReference type="ChEBI" id="CHEBI:30011"/>
        <dbReference type="EC" id="3.5.1.44"/>
    </reaction>
</comment>
<comment type="similarity">
    <text evidence="1">Belongs to the CheD family.</text>
</comment>
<keyword id="KW-0145">Chemotaxis</keyword>
<keyword id="KW-0378">Hydrolase</keyword>
<dbReference type="EC" id="3.5.1.44" evidence="1"/>
<dbReference type="EMBL" id="CP000463">
    <property type="protein sequence ID" value="ABJ05149.1"/>
    <property type="molecule type" value="Genomic_DNA"/>
</dbReference>
<dbReference type="SMR" id="Q07SD5"/>
<dbReference type="STRING" id="316055.RPE_1197"/>
<dbReference type="KEGG" id="rpe:RPE_1197"/>
<dbReference type="eggNOG" id="COG1871">
    <property type="taxonomic scope" value="Bacteria"/>
</dbReference>
<dbReference type="HOGENOM" id="CLU_087854_0_0_5"/>
<dbReference type="OrthoDB" id="9807202at2"/>
<dbReference type="GO" id="GO:0050568">
    <property type="term" value="F:protein-glutamine glutaminase activity"/>
    <property type="evidence" value="ECO:0007669"/>
    <property type="project" value="UniProtKB-UniRule"/>
</dbReference>
<dbReference type="GO" id="GO:0006935">
    <property type="term" value="P:chemotaxis"/>
    <property type="evidence" value="ECO:0007669"/>
    <property type="project" value="UniProtKB-UniRule"/>
</dbReference>
<dbReference type="CDD" id="cd16352">
    <property type="entry name" value="CheD"/>
    <property type="match status" value="1"/>
</dbReference>
<dbReference type="Gene3D" id="3.30.1330.200">
    <property type="match status" value="1"/>
</dbReference>
<dbReference type="HAMAP" id="MF_01440">
    <property type="entry name" value="CheD"/>
    <property type="match status" value="1"/>
</dbReference>
<dbReference type="InterPro" id="IPR038592">
    <property type="entry name" value="CheD-like_sf"/>
</dbReference>
<dbReference type="InterPro" id="IPR005659">
    <property type="entry name" value="Chemorcpt_Glu_NH3ase_CheD"/>
</dbReference>
<dbReference type="InterPro" id="IPR011324">
    <property type="entry name" value="Cytotoxic_necrot_fac-like_cat"/>
</dbReference>
<dbReference type="NCBIfam" id="NF010013">
    <property type="entry name" value="PRK13487.1"/>
    <property type="match status" value="1"/>
</dbReference>
<dbReference type="PANTHER" id="PTHR35147">
    <property type="entry name" value="CHEMORECEPTOR GLUTAMINE DEAMIDASE CHED-RELATED"/>
    <property type="match status" value="1"/>
</dbReference>
<dbReference type="PANTHER" id="PTHR35147:SF2">
    <property type="entry name" value="CHEMORECEPTOR GLUTAMINE DEAMIDASE CHED-RELATED"/>
    <property type="match status" value="1"/>
</dbReference>
<dbReference type="Pfam" id="PF03975">
    <property type="entry name" value="CheD"/>
    <property type="match status" value="1"/>
</dbReference>
<dbReference type="SUPFAM" id="SSF64438">
    <property type="entry name" value="CNF1/YfiH-like putative cysteine hydrolases"/>
    <property type="match status" value="1"/>
</dbReference>
<feature type="chain" id="PRO_1000068557" description="Probable chemoreceptor glutamine deamidase CheD">
    <location>
        <begin position="1"/>
        <end position="213"/>
    </location>
</feature>
<feature type="region of interest" description="Disordered" evidence="2">
    <location>
        <begin position="1"/>
        <end position="25"/>
    </location>
</feature>
<feature type="compositionally biased region" description="Basic residues" evidence="2">
    <location>
        <begin position="1"/>
        <end position="12"/>
    </location>
</feature>
<reference key="1">
    <citation type="submission" date="2006-09" db="EMBL/GenBank/DDBJ databases">
        <title>Complete sequence of Rhodopseudomonas palustris BisA53.</title>
        <authorList>
            <consortium name="US DOE Joint Genome Institute"/>
            <person name="Copeland A."/>
            <person name="Lucas S."/>
            <person name="Lapidus A."/>
            <person name="Barry K."/>
            <person name="Detter J.C."/>
            <person name="Glavina del Rio T."/>
            <person name="Hammon N."/>
            <person name="Israni S."/>
            <person name="Dalin E."/>
            <person name="Tice H."/>
            <person name="Pitluck S."/>
            <person name="Chain P."/>
            <person name="Malfatti S."/>
            <person name="Shin M."/>
            <person name="Vergez L."/>
            <person name="Schmutz J."/>
            <person name="Larimer F."/>
            <person name="Land M."/>
            <person name="Hauser L."/>
            <person name="Pelletier D.A."/>
            <person name="Kyrpides N."/>
            <person name="Kim E."/>
            <person name="Harwood C.S."/>
            <person name="Oda Y."/>
            <person name="Richardson P."/>
        </authorList>
    </citation>
    <scope>NUCLEOTIDE SEQUENCE [LARGE SCALE GENOMIC DNA]</scope>
    <source>
        <strain>BisA53</strain>
    </source>
</reference>
<organism>
    <name type="scientific">Rhodopseudomonas palustris (strain BisA53)</name>
    <dbReference type="NCBI Taxonomy" id="316055"/>
    <lineage>
        <taxon>Bacteria</taxon>
        <taxon>Pseudomonadati</taxon>
        <taxon>Pseudomonadota</taxon>
        <taxon>Alphaproteobacteria</taxon>
        <taxon>Hyphomicrobiales</taxon>
        <taxon>Nitrobacteraceae</taxon>
        <taxon>Rhodopseudomonas</taxon>
    </lineage>
</organism>
<protein>
    <recommendedName>
        <fullName evidence="1">Probable chemoreceptor glutamine deamidase CheD</fullName>
        <ecNumber evidence="1">3.5.1.44</ecNumber>
    </recommendedName>
</protein>
<accession>Q07SD5</accession>
<proteinExistence type="inferred from homology"/>
<evidence type="ECO:0000255" key="1">
    <source>
        <dbReference type="HAMAP-Rule" id="MF_01440"/>
    </source>
</evidence>
<evidence type="ECO:0000256" key="2">
    <source>
        <dbReference type="SAM" id="MobiDB-lite"/>
    </source>
</evidence>
<gene>
    <name evidence="1" type="primary">cheD</name>
    <name type="ordered locus">RPE_1197</name>
</gene>